<reference key="1">
    <citation type="journal article" date="2007" name="PLoS Genet.">
        <title>Patterns and implications of gene gain and loss in the evolution of Prochlorococcus.</title>
        <authorList>
            <person name="Kettler G.C."/>
            <person name="Martiny A.C."/>
            <person name="Huang K."/>
            <person name="Zucker J."/>
            <person name="Coleman M.L."/>
            <person name="Rodrigue S."/>
            <person name="Chen F."/>
            <person name="Lapidus A."/>
            <person name="Ferriera S."/>
            <person name="Johnson J."/>
            <person name="Steglich C."/>
            <person name="Church G.M."/>
            <person name="Richardson P."/>
            <person name="Chisholm S.W."/>
        </authorList>
    </citation>
    <scope>NUCLEOTIDE SEQUENCE [LARGE SCALE GENOMIC DNA]</scope>
    <source>
        <strain>NATL2A</strain>
    </source>
</reference>
<name>PCBF_PROMT</name>
<dbReference type="EMBL" id="CP000095">
    <property type="protein sequence ID" value="AAZ58213.1"/>
    <property type="molecule type" value="Genomic_DNA"/>
</dbReference>
<dbReference type="RefSeq" id="WP_011294811.1">
    <property type="nucleotide sequence ID" value="NC_007335.2"/>
</dbReference>
<dbReference type="SMR" id="Q46JW5"/>
<dbReference type="STRING" id="59920.PMN2A_0722"/>
<dbReference type="KEGG" id="pmn:PMN2A_0722"/>
<dbReference type="HOGENOM" id="CLU_028310_0_0_3"/>
<dbReference type="OrthoDB" id="9429529at2"/>
<dbReference type="PhylomeDB" id="Q46JW5"/>
<dbReference type="Proteomes" id="UP000002535">
    <property type="component" value="Chromosome"/>
</dbReference>
<dbReference type="GO" id="GO:0009522">
    <property type="term" value="C:photosystem I"/>
    <property type="evidence" value="ECO:0007669"/>
    <property type="project" value="UniProtKB-KW"/>
</dbReference>
<dbReference type="GO" id="GO:0009523">
    <property type="term" value="C:photosystem II"/>
    <property type="evidence" value="ECO:0007669"/>
    <property type="project" value="UniProtKB-KW"/>
</dbReference>
<dbReference type="GO" id="GO:0031676">
    <property type="term" value="C:plasma membrane-derived thylakoid membrane"/>
    <property type="evidence" value="ECO:0007669"/>
    <property type="project" value="UniProtKB-SubCell"/>
</dbReference>
<dbReference type="GO" id="GO:0016168">
    <property type="term" value="F:chlorophyll binding"/>
    <property type="evidence" value="ECO:0007669"/>
    <property type="project" value="UniProtKB-KW"/>
</dbReference>
<dbReference type="GO" id="GO:0009767">
    <property type="term" value="P:photosynthetic electron transport chain"/>
    <property type="evidence" value="ECO:0007669"/>
    <property type="project" value="InterPro"/>
</dbReference>
<dbReference type="InterPro" id="IPR000932">
    <property type="entry name" value="PS_antenna-like"/>
</dbReference>
<dbReference type="InterPro" id="IPR036001">
    <property type="entry name" value="PS_II_antenna-like_sf"/>
</dbReference>
<dbReference type="NCBIfam" id="TIGR03041">
    <property type="entry name" value="PS_antenn_a_b"/>
    <property type="match status" value="1"/>
</dbReference>
<dbReference type="Pfam" id="PF00421">
    <property type="entry name" value="PSII"/>
    <property type="match status" value="1"/>
</dbReference>
<dbReference type="SUPFAM" id="SSF161077">
    <property type="entry name" value="Photosystem II antenna protein-like"/>
    <property type="match status" value="1"/>
</dbReference>
<organism>
    <name type="scientific">Prochlorococcus marinus (strain NATL2A)</name>
    <dbReference type="NCBI Taxonomy" id="59920"/>
    <lineage>
        <taxon>Bacteria</taxon>
        <taxon>Bacillati</taxon>
        <taxon>Cyanobacteriota</taxon>
        <taxon>Cyanophyceae</taxon>
        <taxon>Synechococcales</taxon>
        <taxon>Prochlorococcaceae</taxon>
        <taxon>Prochlorococcus</taxon>
    </lineage>
</organism>
<protein>
    <recommendedName>
        <fullName>Divinyl chlorophyll a/b light-harvesting protein PcbF</fullName>
    </recommendedName>
</protein>
<keyword id="KW-0148">Chlorophyll</keyword>
<keyword id="KW-0157">Chromophore</keyword>
<keyword id="KW-0472">Membrane</keyword>
<keyword id="KW-0602">Photosynthesis</keyword>
<keyword id="KW-0603">Photosystem I</keyword>
<keyword id="KW-0604">Photosystem II</keyword>
<keyword id="KW-1185">Reference proteome</keyword>
<keyword id="KW-0793">Thylakoid</keyword>
<keyword id="KW-0812">Transmembrane</keyword>
<keyword id="KW-1133">Transmembrane helix</keyword>
<feature type="chain" id="PRO_0000077554" description="Divinyl chlorophyll a/b light-harvesting protein PcbF">
    <location>
        <begin position="1"/>
        <end position="362"/>
    </location>
</feature>
<feature type="transmembrane region" description="Helical" evidence="3">
    <location>
        <begin position="27"/>
        <end position="47"/>
    </location>
</feature>
<feature type="transmembrane region" description="Helical" evidence="3">
    <location>
        <begin position="89"/>
        <end position="109"/>
    </location>
</feature>
<feature type="transmembrane region" description="Helical" evidence="3">
    <location>
        <begin position="150"/>
        <end position="170"/>
    </location>
</feature>
<feature type="transmembrane region" description="Helical" evidence="3">
    <location>
        <begin position="211"/>
        <end position="231"/>
    </location>
</feature>
<feature type="transmembrane region" description="Helical" evidence="3">
    <location>
        <begin position="251"/>
        <end position="271"/>
    </location>
</feature>
<feature type="transmembrane region" description="Helical" evidence="3">
    <location>
        <begin position="316"/>
        <end position="336"/>
    </location>
</feature>
<proteinExistence type="inferred from homology"/>
<sequence>MQSYGNPDVTYGWWVGNSVVTNKSSRFIGSHVAHTGLICFAAGANTLWELARYNPDIPMGHQGMVSIPHLASIGIGFDPTGTVFDGTSIAFIGVFHLICSMVYAGAGLLHSLIFSEDTQNSSGLFADDRPEHRQAARYKLEWDNPDNQTFILGHHLIFFGVACIWFVEWARIHGIYDPAIGAVRQVEYNLNLTNIWNHQFDFLAIDSLEDVMGGHAFLAFVEITGGAFHIATKQTGEYTEFKGKNILSAEAVLSWSLAGIGWMAIIAAFWCATNTTVYPEAWYGETLALKFGISPYWIDTADMTGVVSGHTSRAWLANVHYYLGFFFIQGHLWHAIRALGFDFKKVTDAISNLDGARVTLTD</sequence>
<comment type="function">
    <text evidence="2">The antenna complex functions as a light receptor, it captures and delivers excitation energy to photosystems II and I. The Prochlorales pcb genes are not related to higher plant LHCs.</text>
</comment>
<comment type="cofactor">
    <cofactor evidence="2">
        <name>divinyl chlorophyll a</name>
        <dbReference type="ChEBI" id="CHEBI:73095"/>
    </cofactor>
</comment>
<comment type="cofactor">
    <cofactor evidence="2">
        <name>divinyl chlorophyll b</name>
        <dbReference type="ChEBI" id="CHEBI:73096"/>
    </cofactor>
</comment>
<comment type="subunit">
    <text evidence="2">The antenna complex consists of divinyl chlorophylls (a and b) and divinyl chlorophyll a/b binding proteins and binds more divinyl chlorophyll b than does the antenna complex from high-light-adapted Prochlorococcus.</text>
</comment>
<comment type="subcellular location">
    <subcellularLocation>
        <location evidence="2">Cellular thylakoid membrane</location>
        <topology evidence="1">Multi-pass membrane protein</topology>
    </subcellularLocation>
</comment>
<comment type="miscellaneous">
    <text evidence="4">This low-light-adapted strain contains 7 pcb genes.</text>
</comment>
<comment type="similarity">
    <text evidence="5">Belongs to the PsbB/PsbC family. IsiA/Pcb subfamily.</text>
</comment>
<gene>
    <name type="primary">pcbF</name>
    <name type="ordered locus">PMN2A_0722</name>
</gene>
<accession>Q46JW5</accession>
<evidence type="ECO:0000250" key="1"/>
<evidence type="ECO:0000250" key="2">
    <source>
        <dbReference type="UniProtKB" id="Q6Q972"/>
    </source>
</evidence>
<evidence type="ECO:0000255" key="3"/>
<evidence type="ECO:0000303" key="4">
    <source>
    </source>
</evidence>
<evidence type="ECO:0000305" key="5"/>